<dbReference type="EMBL" id="U56981">
    <property type="protein sequence ID" value="AAB03788.1"/>
    <property type="molecule type" value="mRNA"/>
</dbReference>
<dbReference type="SMR" id="Q39490"/>
<dbReference type="GO" id="GO:0005737">
    <property type="term" value="C:cytoplasm"/>
    <property type="evidence" value="ECO:0007669"/>
    <property type="project" value="UniProtKB-KW"/>
</dbReference>
<dbReference type="GO" id="GO:0005874">
    <property type="term" value="C:microtubule"/>
    <property type="evidence" value="ECO:0007669"/>
    <property type="project" value="UniProtKB-KW"/>
</dbReference>
<dbReference type="GO" id="GO:0005200">
    <property type="term" value="F:structural constituent of cytoskeleton"/>
    <property type="evidence" value="ECO:0007669"/>
    <property type="project" value="InterPro"/>
</dbReference>
<dbReference type="InterPro" id="IPR008374">
    <property type="entry name" value="SF_assemblin/giardin_b"/>
</dbReference>
<dbReference type="PANTHER" id="PTHR40412">
    <property type="entry name" value="SF-ASSEMBLIN"/>
    <property type="match status" value="1"/>
</dbReference>
<dbReference type="PANTHER" id="PTHR40412:SF1">
    <property type="entry name" value="SF-ASSEMBLIN"/>
    <property type="match status" value="1"/>
</dbReference>
<dbReference type="Pfam" id="PF06705">
    <property type="entry name" value="SF-assemblin"/>
    <property type="match status" value="1"/>
</dbReference>
<dbReference type="PRINTS" id="PR01799">
    <property type="entry name" value="SFASSEMBLIN"/>
</dbReference>
<proteinExistence type="evidence at transcript level"/>
<protein>
    <recommendedName>
        <fullName>SF-assemblin</fullName>
    </recommendedName>
</protein>
<keyword id="KW-0175">Coiled coil</keyword>
<keyword id="KW-0963">Cytoplasm</keyword>
<keyword id="KW-0206">Cytoskeleton</keyword>
<keyword id="KW-0493">Microtubule</keyword>
<organism>
    <name type="scientific">Chlamydomonas moewusii</name>
    <name type="common">Chlamydomonas eugametos</name>
    <dbReference type="NCBI Taxonomy" id="3054"/>
    <lineage>
        <taxon>Eukaryota</taxon>
        <taxon>Viridiplantae</taxon>
        <taxon>Chlorophyta</taxon>
        <taxon>core chlorophytes</taxon>
        <taxon>Chlorophyceae</taxon>
        <taxon>CS clade</taxon>
        <taxon>Chlamydomonadales</taxon>
        <taxon>Chlamydomonadaceae</taxon>
        <taxon>Chlamydomonas</taxon>
    </lineage>
</organism>
<name>SFAS_CHLMO</name>
<accession>Q39490</accession>
<sequence length="269" mass="30444">MSISPGRSFSPMRASGLTGITSAGPTAKLEHVSERFASLWTDLEHEKQNRKLAESSRFQLFTEAVSRLEKGLEAEVKRRAESDKQLQSHFEGEIRALAERSAAQHVDMQNSLKQAVDSLSNRLQDLHSLVREEREQRRNDIEHLATSLVGKVNECVQALDEERNSRLQDQSLSLKRFGEDLITIQQRVDQEKLVRDAELSGLRSEVHEALGNRNLADEQFRNMTLDELTALKGALALEREERIAEDDEIVQAINDYTKALQEGLKLVST</sequence>
<evidence type="ECO:0000250" key="1"/>
<evidence type="ECO:0000255" key="2"/>
<evidence type="ECO:0000256" key="3">
    <source>
        <dbReference type="SAM" id="MobiDB-lite"/>
    </source>
</evidence>
<evidence type="ECO:0000305" key="4"/>
<feature type="chain" id="PRO_0000221440" description="SF-assemblin">
    <location>
        <begin position="1"/>
        <end position="269"/>
    </location>
</feature>
<feature type="region of interest" description="Nonhelical region">
    <location>
        <begin position="1"/>
        <end position="24"/>
    </location>
</feature>
<feature type="region of interest" description="Disordered" evidence="3">
    <location>
        <begin position="1"/>
        <end position="23"/>
    </location>
</feature>
<feature type="region of interest" description="Rod">
    <location>
        <begin position="25"/>
        <end position="269"/>
    </location>
</feature>
<feature type="coiled-coil region" evidence="2">
    <location>
        <begin position="98"/>
        <end position="144"/>
    </location>
</feature>
<reference key="1">
    <citation type="journal article" date="1997" name="Cell Motil. Cytoskeleton">
        <title>SF-assemblin in Chlamydomonas: sequence conservation and localization during the cell cycle.</title>
        <authorList>
            <person name="Lechtreck K.-F."/>
            <person name="Silflow C."/>
        </authorList>
    </citation>
    <scope>NUCLEOTIDE SEQUENCE [MRNA]</scope>
</reference>
<comment type="function">
    <text>Major component of the striated microtubule-associated fibers (SMAFs; system-I-fibers).</text>
</comment>
<comment type="subcellular location">
    <subcellularLocation>
        <location>Cytoplasm</location>
        <location>Cytoskeleton</location>
    </subcellularLocation>
</comment>
<comment type="domain">
    <text evidence="1">Consists of a small non-helical N-terminal domain and a rod domain with a 29 residue repeat pattern based on four heptads followed by a skip residue. This alpha-helical protein is characterized by the ability to form a special segmented coiled coil and to assemble into striated fibers of 2 nm protofilaments (By similarity).</text>
</comment>
<comment type="similarity">
    <text evidence="4">Belongs to the SF-assemblin family.</text>
</comment>